<protein>
    <recommendedName>
        <fullName>Probable protein phosphatase 2C 25</fullName>
        <shortName>AtPP2C25</shortName>
        <ecNumber>3.1.3.16</ecNumber>
    </recommendedName>
    <alternativeName>
        <fullName>Protein phosphatase AP2C1</fullName>
    </alternativeName>
</protein>
<reference key="1">
    <citation type="journal article" date="1999" name="Nature">
        <title>Sequence and analysis of chromosome 2 of the plant Arabidopsis thaliana.</title>
        <authorList>
            <person name="Lin X."/>
            <person name="Kaul S."/>
            <person name="Rounsley S.D."/>
            <person name="Shea T.P."/>
            <person name="Benito M.-I."/>
            <person name="Town C.D."/>
            <person name="Fujii C.Y."/>
            <person name="Mason T.M."/>
            <person name="Bowman C.L."/>
            <person name="Barnstead M.E."/>
            <person name="Feldblyum T.V."/>
            <person name="Buell C.R."/>
            <person name="Ketchum K.A."/>
            <person name="Lee J.J."/>
            <person name="Ronning C.M."/>
            <person name="Koo H.L."/>
            <person name="Moffat K.S."/>
            <person name="Cronin L.A."/>
            <person name="Shen M."/>
            <person name="Pai G."/>
            <person name="Van Aken S."/>
            <person name="Umayam L."/>
            <person name="Tallon L.J."/>
            <person name="Gill J.E."/>
            <person name="Adams M.D."/>
            <person name="Carrera A.J."/>
            <person name="Creasy T.H."/>
            <person name="Goodman H.M."/>
            <person name="Somerville C.R."/>
            <person name="Copenhaver G.P."/>
            <person name="Preuss D."/>
            <person name="Nierman W.C."/>
            <person name="White O."/>
            <person name="Eisen J.A."/>
            <person name="Salzberg S.L."/>
            <person name="Fraser C.M."/>
            <person name="Venter J.C."/>
        </authorList>
    </citation>
    <scope>NUCLEOTIDE SEQUENCE [LARGE SCALE GENOMIC DNA]</scope>
    <source>
        <strain>cv. Columbia</strain>
    </source>
</reference>
<reference key="2">
    <citation type="journal article" date="2017" name="Plant J.">
        <title>Araport11: a complete reannotation of the Arabidopsis thaliana reference genome.</title>
        <authorList>
            <person name="Cheng C.Y."/>
            <person name="Krishnakumar V."/>
            <person name="Chan A.P."/>
            <person name="Thibaud-Nissen F."/>
            <person name="Schobel S."/>
            <person name="Town C.D."/>
        </authorList>
    </citation>
    <scope>GENOME REANNOTATION</scope>
    <source>
        <strain>cv. Columbia</strain>
    </source>
</reference>
<reference key="3">
    <citation type="journal article" date="2003" name="Science">
        <title>Empirical analysis of transcriptional activity in the Arabidopsis genome.</title>
        <authorList>
            <person name="Yamada K."/>
            <person name="Lim J."/>
            <person name="Dale J.M."/>
            <person name="Chen H."/>
            <person name="Shinn P."/>
            <person name="Palm C.J."/>
            <person name="Southwick A.M."/>
            <person name="Wu H.C."/>
            <person name="Kim C.J."/>
            <person name="Nguyen M."/>
            <person name="Pham P.K."/>
            <person name="Cheuk R.F."/>
            <person name="Karlin-Newmann G."/>
            <person name="Liu S.X."/>
            <person name="Lam B."/>
            <person name="Sakano H."/>
            <person name="Wu T."/>
            <person name="Yu G."/>
            <person name="Miranda M."/>
            <person name="Quach H.L."/>
            <person name="Tripp M."/>
            <person name="Chang C.H."/>
            <person name="Lee J.M."/>
            <person name="Toriumi M.J."/>
            <person name="Chan M.M."/>
            <person name="Tang C.C."/>
            <person name="Onodera C.S."/>
            <person name="Deng J.M."/>
            <person name="Akiyama K."/>
            <person name="Ansari Y."/>
            <person name="Arakawa T."/>
            <person name="Banh J."/>
            <person name="Banno F."/>
            <person name="Bowser L."/>
            <person name="Brooks S.Y."/>
            <person name="Carninci P."/>
            <person name="Chao Q."/>
            <person name="Choy N."/>
            <person name="Enju A."/>
            <person name="Goldsmith A.D."/>
            <person name="Gurjal M."/>
            <person name="Hansen N.F."/>
            <person name="Hayashizaki Y."/>
            <person name="Johnson-Hopson C."/>
            <person name="Hsuan V.W."/>
            <person name="Iida K."/>
            <person name="Karnes M."/>
            <person name="Khan S."/>
            <person name="Koesema E."/>
            <person name="Ishida J."/>
            <person name="Jiang P.X."/>
            <person name="Jones T."/>
            <person name="Kawai J."/>
            <person name="Kamiya A."/>
            <person name="Meyers C."/>
            <person name="Nakajima M."/>
            <person name="Narusaka M."/>
            <person name="Seki M."/>
            <person name="Sakurai T."/>
            <person name="Satou M."/>
            <person name="Tamse R."/>
            <person name="Vaysberg M."/>
            <person name="Wallender E.K."/>
            <person name="Wong C."/>
            <person name="Yamamura Y."/>
            <person name="Yuan S."/>
            <person name="Shinozaki K."/>
            <person name="Davis R.W."/>
            <person name="Theologis A."/>
            <person name="Ecker J.R."/>
        </authorList>
    </citation>
    <scope>NUCLEOTIDE SEQUENCE [LARGE SCALE MRNA]</scope>
    <source>
        <strain>cv. Columbia</strain>
    </source>
</reference>
<reference key="4">
    <citation type="journal article" date="2007" name="Plant Cell">
        <title>The PP2C-type phosphatase AP2C1, which negatively regulates MPK4 and MPK6, modulates innate immunity, jasmonic acid, and ethylene levels in Arabidopsis.</title>
        <authorList>
            <person name="Schweighofer A."/>
            <person name="Kazanaviciute V."/>
            <person name="Scheikl E."/>
            <person name="Teige M."/>
            <person name="Doczi R."/>
            <person name="Hirt H."/>
            <person name="Schwanninger M."/>
            <person name="Kant M."/>
            <person name="Schuurink R."/>
            <person name="Mauch F."/>
            <person name="Buchala A."/>
            <person name="Cardinale F."/>
            <person name="Meskiene I."/>
        </authorList>
    </citation>
    <scope>FUNCTION</scope>
    <scope>SUBCELLULAR LOCATION</scope>
    <scope>INDUCTION</scope>
    <scope>INTERACTION WITH MAPK4 AND MAPK6</scope>
    <scope>DISRUPTION PHENOTYPE</scope>
    <scope>MUTAGENESIS OF LYS-98; ARG-99 AND GLY-178</scope>
</reference>
<reference key="5">
    <citation type="journal article" date="2008" name="BMC Genomics">
        <title>Genome-wide and expression analysis of protein phosphatase 2C in rice and Arabidopsis.</title>
        <authorList>
            <person name="Xue T."/>
            <person name="Wang D."/>
            <person name="Zhang S."/>
            <person name="Ehlting J."/>
            <person name="Ni F."/>
            <person name="Jacab S."/>
            <person name="Zheng C."/>
            <person name="Zhong Y."/>
        </authorList>
    </citation>
    <scope>GENE FAMILY</scope>
    <scope>NOMENCLATURE</scope>
</reference>
<keyword id="KW-0963">Cytoplasm</keyword>
<keyword id="KW-0378">Hydrolase</keyword>
<keyword id="KW-0460">Magnesium</keyword>
<keyword id="KW-0464">Manganese</keyword>
<keyword id="KW-0479">Metal-binding</keyword>
<keyword id="KW-0539">Nucleus</keyword>
<keyword id="KW-0904">Protein phosphatase</keyword>
<keyword id="KW-1185">Reference proteome</keyword>
<gene>
    <name type="ordered locus">At2g30020</name>
    <name type="ORF">F23F1.6</name>
</gene>
<name>P2C25_ARATH</name>
<sequence>MSCSVAVCNSPVFSPSSSLFCNKSSILSSPQESLSLTLSHRKPQTSSPSSPSTTVSSPKSPFRLRFQKPPSGFAPGPLSFGSESVSASSPPGGVLKRKRPTRLDIPIGVAGFVAPISSSAAVAATPREECREVEREGDGYSVYCKRGRREAMEDRFSAITNLHGDRKQAIFGVYDGHGGVKAAEFAAKNLDKNIVEEVVGKRDESEIAEAVKHGYLATDASFLKEEDVKGGSCCVTALVNEGNLVVSNAGDCRAVMSVGGVAKALSSDHRPSRDDERKRIETTGGYVDTFHGVWRIQGSLAVSRGIGDAQLKKWVIAEPETKISRIEHDHEFLILASDGLWDKVSNQEAVDIARPLCLGTEKPLLLAACKKLVDLSASRGSSDDISVMLIPLRQFI</sequence>
<organism>
    <name type="scientific">Arabidopsis thaliana</name>
    <name type="common">Mouse-ear cress</name>
    <dbReference type="NCBI Taxonomy" id="3702"/>
    <lineage>
        <taxon>Eukaryota</taxon>
        <taxon>Viridiplantae</taxon>
        <taxon>Streptophyta</taxon>
        <taxon>Embryophyta</taxon>
        <taxon>Tracheophyta</taxon>
        <taxon>Spermatophyta</taxon>
        <taxon>Magnoliopsida</taxon>
        <taxon>eudicotyledons</taxon>
        <taxon>Gunneridae</taxon>
        <taxon>Pentapetalae</taxon>
        <taxon>rosids</taxon>
        <taxon>malvids</taxon>
        <taxon>Brassicales</taxon>
        <taxon>Brassicaceae</taxon>
        <taxon>Camelineae</taxon>
        <taxon>Arabidopsis</taxon>
    </lineage>
</organism>
<feature type="chain" id="PRO_0000367954" description="Probable protein phosphatase 2C 25">
    <location>
        <begin position="1"/>
        <end position="396"/>
    </location>
</feature>
<feature type="domain" description="PPM-type phosphatase" evidence="2">
    <location>
        <begin position="139"/>
        <end position="392"/>
    </location>
</feature>
<feature type="region of interest" description="Disordered" evidence="3">
    <location>
        <begin position="32"/>
        <end position="98"/>
    </location>
</feature>
<feature type="compositionally biased region" description="Low complexity" evidence="3">
    <location>
        <begin position="44"/>
        <end position="61"/>
    </location>
</feature>
<feature type="binding site" evidence="1">
    <location>
        <position position="175"/>
    </location>
    <ligand>
        <name>Mn(2+)</name>
        <dbReference type="ChEBI" id="CHEBI:29035"/>
        <label>1</label>
    </ligand>
</feature>
<feature type="binding site" evidence="1">
    <location>
        <position position="175"/>
    </location>
    <ligand>
        <name>Mn(2+)</name>
        <dbReference type="ChEBI" id="CHEBI:29035"/>
        <label>2</label>
    </ligand>
</feature>
<feature type="binding site" evidence="1">
    <location>
        <position position="176"/>
    </location>
    <ligand>
        <name>Mn(2+)</name>
        <dbReference type="ChEBI" id="CHEBI:29035"/>
        <label>1</label>
    </ligand>
</feature>
<feature type="binding site" evidence="1">
    <location>
        <position position="338"/>
    </location>
    <ligand>
        <name>Mn(2+)</name>
        <dbReference type="ChEBI" id="CHEBI:29035"/>
        <label>2</label>
    </ligand>
</feature>
<feature type="binding site" evidence="1">
    <location>
        <position position="383"/>
    </location>
    <ligand>
        <name>Mn(2+)</name>
        <dbReference type="ChEBI" id="CHEBI:29035"/>
        <label>2</label>
    </ligand>
</feature>
<feature type="mutagenesis site" description="Abolishes interaction with MPK4 and MPK6; when associated with Q-99." evidence="4">
    <original>K</original>
    <variation>A</variation>
    <location>
        <position position="98"/>
    </location>
</feature>
<feature type="mutagenesis site" description="Abolishes interaction with MPK4 and MPK6; when associated with A-98." evidence="4">
    <original>R</original>
    <variation>Q</variation>
    <location>
        <position position="99"/>
    </location>
</feature>
<feature type="mutagenesis site" description="Loss of activity." evidence="4">
    <original>G</original>
    <variation>D</variation>
    <location>
        <position position="178"/>
    </location>
</feature>
<accession>O80871</accession>
<evidence type="ECO:0000250" key="1"/>
<evidence type="ECO:0000255" key="2">
    <source>
        <dbReference type="PROSITE-ProRule" id="PRU01082"/>
    </source>
</evidence>
<evidence type="ECO:0000256" key="3">
    <source>
        <dbReference type="SAM" id="MobiDB-lite"/>
    </source>
</evidence>
<evidence type="ECO:0000269" key="4">
    <source>
    </source>
</evidence>
<evidence type="ECO:0000305" key="5"/>
<dbReference type="EC" id="3.1.3.16"/>
<dbReference type="EMBL" id="AC004680">
    <property type="protein sequence ID" value="AAC31850.1"/>
    <property type="molecule type" value="Genomic_DNA"/>
</dbReference>
<dbReference type="EMBL" id="CP002685">
    <property type="protein sequence ID" value="AEC08336.1"/>
    <property type="molecule type" value="Genomic_DNA"/>
</dbReference>
<dbReference type="EMBL" id="AF370594">
    <property type="protein sequence ID" value="AAK43913.1"/>
    <property type="molecule type" value="mRNA"/>
</dbReference>
<dbReference type="PIR" id="T02483">
    <property type="entry name" value="T02483"/>
</dbReference>
<dbReference type="RefSeq" id="NP_180563.1">
    <property type="nucleotide sequence ID" value="NM_128557.4"/>
</dbReference>
<dbReference type="SMR" id="O80871"/>
<dbReference type="BioGRID" id="2903">
    <property type="interactions" value="15"/>
</dbReference>
<dbReference type="FunCoup" id="O80871">
    <property type="interactions" value="19"/>
</dbReference>
<dbReference type="IntAct" id="O80871">
    <property type="interactions" value="13"/>
</dbReference>
<dbReference type="STRING" id="3702.O80871"/>
<dbReference type="PaxDb" id="3702-AT2G30020.1"/>
<dbReference type="ProteomicsDB" id="248708"/>
<dbReference type="EnsemblPlants" id="AT2G30020.1">
    <property type="protein sequence ID" value="AT2G30020.1"/>
    <property type="gene ID" value="AT2G30020"/>
</dbReference>
<dbReference type="GeneID" id="817553"/>
<dbReference type="Gramene" id="AT2G30020.1">
    <property type="protein sequence ID" value="AT2G30020.1"/>
    <property type="gene ID" value="AT2G30020"/>
</dbReference>
<dbReference type="KEGG" id="ath:AT2G30020"/>
<dbReference type="Araport" id="AT2G30020"/>
<dbReference type="TAIR" id="AT2G30020">
    <property type="gene designation" value="AP2C1"/>
</dbReference>
<dbReference type="eggNOG" id="KOG0698">
    <property type="taxonomic scope" value="Eukaryota"/>
</dbReference>
<dbReference type="HOGENOM" id="CLU_013173_5_1_1"/>
<dbReference type="InParanoid" id="O80871"/>
<dbReference type="OMA" id="VWRIQGC"/>
<dbReference type="OrthoDB" id="10264738at2759"/>
<dbReference type="PhylomeDB" id="O80871"/>
<dbReference type="PRO" id="PR:O80871"/>
<dbReference type="Proteomes" id="UP000006548">
    <property type="component" value="Chromosome 2"/>
</dbReference>
<dbReference type="ExpressionAtlas" id="O80871">
    <property type="expression patterns" value="baseline and differential"/>
</dbReference>
<dbReference type="GO" id="GO:0005634">
    <property type="term" value="C:nucleus"/>
    <property type="evidence" value="ECO:0007669"/>
    <property type="project" value="UniProtKB-SubCell"/>
</dbReference>
<dbReference type="GO" id="GO:0009536">
    <property type="term" value="C:plastid"/>
    <property type="evidence" value="ECO:0000314"/>
    <property type="project" value="TAIR"/>
</dbReference>
<dbReference type="GO" id="GO:0046872">
    <property type="term" value="F:metal ion binding"/>
    <property type="evidence" value="ECO:0007669"/>
    <property type="project" value="UniProtKB-KW"/>
</dbReference>
<dbReference type="GO" id="GO:0004722">
    <property type="term" value="F:protein serine/threonine phosphatase activity"/>
    <property type="evidence" value="ECO:0000314"/>
    <property type="project" value="TAIR"/>
</dbReference>
<dbReference type="GO" id="GO:0009738">
    <property type="term" value="P:abscisic acid-activated signaling pathway"/>
    <property type="evidence" value="ECO:0000315"/>
    <property type="project" value="TAIR"/>
</dbReference>
<dbReference type="GO" id="GO:0050832">
    <property type="term" value="P:defense response to fungus"/>
    <property type="evidence" value="ECO:0000315"/>
    <property type="project" value="TAIR"/>
</dbReference>
<dbReference type="GO" id="GO:0009620">
    <property type="term" value="P:response to fungus"/>
    <property type="evidence" value="ECO:0000270"/>
    <property type="project" value="TAIR"/>
</dbReference>
<dbReference type="GO" id="GO:0009611">
    <property type="term" value="P:response to wounding"/>
    <property type="evidence" value="ECO:0000270"/>
    <property type="project" value="TAIR"/>
</dbReference>
<dbReference type="CDD" id="cd00143">
    <property type="entry name" value="PP2Cc"/>
    <property type="match status" value="1"/>
</dbReference>
<dbReference type="FunFam" id="3.60.40.10:FF:000044">
    <property type="entry name" value="probable protein phosphatase 2C 25"/>
    <property type="match status" value="1"/>
</dbReference>
<dbReference type="Gene3D" id="3.60.40.10">
    <property type="entry name" value="PPM-type phosphatase domain"/>
    <property type="match status" value="1"/>
</dbReference>
<dbReference type="InterPro" id="IPR015655">
    <property type="entry name" value="PP2C"/>
</dbReference>
<dbReference type="InterPro" id="IPR000222">
    <property type="entry name" value="PP2C_BS"/>
</dbReference>
<dbReference type="InterPro" id="IPR036457">
    <property type="entry name" value="PPM-type-like_dom_sf"/>
</dbReference>
<dbReference type="InterPro" id="IPR001932">
    <property type="entry name" value="PPM-type_phosphatase-like_dom"/>
</dbReference>
<dbReference type="PANTHER" id="PTHR47992">
    <property type="entry name" value="PROTEIN PHOSPHATASE"/>
    <property type="match status" value="1"/>
</dbReference>
<dbReference type="Pfam" id="PF00481">
    <property type="entry name" value="PP2C"/>
    <property type="match status" value="1"/>
</dbReference>
<dbReference type="SMART" id="SM00332">
    <property type="entry name" value="PP2Cc"/>
    <property type="match status" value="1"/>
</dbReference>
<dbReference type="SUPFAM" id="SSF81606">
    <property type="entry name" value="PP2C-like"/>
    <property type="match status" value="1"/>
</dbReference>
<dbReference type="PROSITE" id="PS01032">
    <property type="entry name" value="PPM_1"/>
    <property type="match status" value="1"/>
</dbReference>
<dbReference type="PROSITE" id="PS51746">
    <property type="entry name" value="PPM_2"/>
    <property type="match status" value="1"/>
</dbReference>
<proteinExistence type="evidence at protein level"/>
<comment type="function">
    <text evidence="4">Protein phosphatase that negatively regulates defense respones. Inactivates MPK4 and MPK6 MAP kinases involved in stress and defense signaling.</text>
</comment>
<comment type="catalytic activity">
    <reaction>
        <text>O-phospho-L-seryl-[protein] + H2O = L-seryl-[protein] + phosphate</text>
        <dbReference type="Rhea" id="RHEA:20629"/>
        <dbReference type="Rhea" id="RHEA-COMP:9863"/>
        <dbReference type="Rhea" id="RHEA-COMP:11604"/>
        <dbReference type="ChEBI" id="CHEBI:15377"/>
        <dbReference type="ChEBI" id="CHEBI:29999"/>
        <dbReference type="ChEBI" id="CHEBI:43474"/>
        <dbReference type="ChEBI" id="CHEBI:83421"/>
        <dbReference type="EC" id="3.1.3.16"/>
    </reaction>
</comment>
<comment type="catalytic activity">
    <reaction>
        <text>O-phospho-L-threonyl-[protein] + H2O = L-threonyl-[protein] + phosphate</text>
        <dbReference type="Rhea" id="RHEA:47004"/>
        <dbReference type="Rhea" id="RHEA-COMP:11060"/>
        <dbReference type="Rhea" id="RHEA-COMP:11605"/>
        <dbReference type="ChEBI" id="CHEBI:15377"/>
        <dbReference type="ChEBI" id="CHEBI:30013"/>
        <dbReference type="ChEBI" id="CHEBI:43474"/>
        <dbReference type="ChEBI" id="CHEBI:61977"/>
        <dbReference type="EC" id="3.1.3.16"/>
    </reaction>
</comment>
<comment type="cofactor">
    <cofactor evidence="1">
        <name>Mg(2+)</name>
        <dbReference type="ChEBI" id="CHEBI:18420"/>
    </cofactor>
    <cofactor evidence="1">
        <name>Mn(2+)</name>
        <dbReference type="ChEBI" id="CHEBI:29035"/>
    </cofactor>
    <text evidence="1">Binds 2 magnesium or manganese ions per subunit.</text>
</comment>
<comment type="subunit">
    <text evidence="4">Interacts with MPK4 and MPK6.</text>
</comment>
<comment type="interaction">
    <interactant intactId="EBI-16897073">
        <id>O80871</id>
    </interactant>
    <interactant intactId="EBI-994375">
        <id>Q39024</id>
        <label>MPK4</label>
    </interactant>
    <organismsDiffer>false</organismsDiffer>
    <experiments>3</experiments>
</comment>
<comment type="interaction">
    <interactant intactId="EBI-16897073">
        <id>O80871</id>
    </interactant>
    <interactant intactId="EBI-349548">
        <id>Q39026</id>
        <label>MPK6</label>
    </interactant>
    <organismsDiffer>false</organismsDiffer>
    <experiments>3</experiments>
</comment>
<comment type="subcellular location">
    <subcellularLocation>
        <location evidence="4">Cytoplasm</location>
    </subcellularLocation>
    <subcellularLocation>
        <location evidence="4">Nucleus</location>
    </subcellularLocation>
</comment>
<comment type="induction">
    <text evidence="4">By wounding.</text>
</comment>
<comment type="disruption phenotype">
    <text evidence="4">High jasmonate production and PDF1.2 expression upon wounding. Slight reduction of lesion size caused by fungal pathogen. Slight decrease of spider mite reproductive performance.</text>
</comment>
<comment type="similarity">
    <text evidence="5">Belongs to the PP2C family.</text>
</comment>